<protein>
    <recommendedName>
        <fullName>Uptake hydrogenase small subunit</fullName>
        <ecNumber>1.12.99.6</ecNumber>
    </recommendedName>
    <alternativeName>
        <fullName>Hydrogenase subunit beta</fullName>
    </alternativeName>
    <alternativeName>
        <fullName>Hydrogenlyase</fullName>
    </alternativeName>
    <alternativeName>
        <fullName>Membrane-bound hydrogenase small subunit</fullName>
    </alternativeName>
</protein>
<proteinExistence type="evidence at protein level"/>
<dbReference type="EC" id="1.12.99.6"/>
<dbReference type="EMBL" id="M33152">
    <property type="protein sequence ID" value="AAA82505.1"/>
    <property type="molecule type" value="Genomic_DNA"/>
</dbReference>
<dbReference type="EMBL" id="L23970">
    <property type="protein sequence ID" value="AAA19498.1"/>
    <property type="molecule type" value="Unassigned_DNA"/>
</dbReference>
<dbReference type="PIR" id="JQ0805">
    <property type="entry name" value="JQ0805"/>
</dbReference>
<dbReference type="RefSeq" id="WP_012703500.1">
    <property type="nucleotide sequence ID" value="NZ_FPKM01000029.1"/>
</dbReference>
<dbReference type="SMR" id="P21950"/>
<dbReference type="OMA" id="NQDGMSC"/>
<dbReference type="GO" id="GO:0044569">
    <property type="term" value="C:[Ni-Fe] hydrogenase complex"/>
    <property type="evidence" value="ECO:0007669"/>
    <property type="project" value="TreeGrafter"/>
</dbReference>
<dbReference type="GO" id="GO:0009375">
    <property type="term" value="C:ferredoxin hydrogenase complex"/>
    <property type="evidence" value="ECO:0007669"/>
    <property type="project" value="InterPro"/>
</dbReference>
<dbReference type="GO" id="GO:0005886">
    <property type="term" value="C:plasma membrane"/>
    <property type="evidence" value="ECO:0007669"/>
    <property type="project" value="UniProtKB-SubCell"/>
</dbReference>
<dbReference type="GO" id="GO:0051538">
    <property type="term" value="F:3 iron, 4 sulfur cluster binding"/>
    <property type="evidence" value="ECO:0007669"/>
    <property type="project" value="UniProtKB-KW"/>
</dbReference>
<dbReference type="GO" id="GO:0051539">
    <property type="term" value="F:4 iron, 4 sulfur cluster binding"/>
    <property type="evidence" value="ECO:0007669"/>
    <property type="project" value="UniProtKB-KW"/>
</dbReference>
<dbReference type="GO" id="GO:0009055">
    <property type="term" value="F:electron transfer activity"/>
    <property type="evidence" value="ECO:0007669"/>
    <property type="project" value="TreeGrafter"/>
</dbReference>
<dbReference type="GO" id="GO:0008901">
    <property type="term" value="F:ferredoxin hydrogenase activity"/>
    <property type="evidence" value="ECO:0007669"/>
    <property type="project" value="InterPro"/>
</dbReference>
<dbReference type="GO" id="GO:0033748">
    <property type="term" value="F:hydrogenase (acceptor) activity"/>
    <property type="evidence" value="ECO:0007669"/>
    <property type="project" value="UniProtKB-EC"/>
</dbReference>
<dbReference type="GO" id="GO:0046872">
    <property type="term" value="F:metal ion binding"/>
    <property type="evidence" value="ECO:0007669"/>
    <property type="project" value="UniProtKB-KW"/>
</dbReference>
<dbReference type="GO" id="GO:0009061">
    <property type="term" value="P:anaerobic respiration"/>
    <property type="evidence" value="ECO:0007669"/>
    <property type="project" value="TreeGrafter"/>
</dbReference>
<dbReference type="FunFam" id="4.10.480.10:FF:000002">
    <property type="entry name" value="Hydrogenase-1 small chain"/>
    <property type="match status" value="1"/>
</dbReference>
<dbReference type="Gene3D" id="4.10.480.10">
    <property type="entry name" value="Cytochrome-c3 hydrogenase, C-terminal domain"/>
    <property type="match status" value="1"/>
</dbReference>
<dbReference type="Gene3D" id="3.40.50.700">
    <property type="entry name" value="NADH:ubiquinone oxidoreductase-like, 20kDa subunit"/>
    <property type="match status" value="1"/>
</dbReference>
<dbReference type="InterPro" id="IPR027394">
    <property type="entry name" value="Cytochrome-c3_hydrogenase_C"/>
</dbReference>
<dbReference type="InterPro" id="IPR006137">
    <property type="entry name" value="NADH_UbQ_OxRdtase-like_20kDa"/>
</dbReference>
<dbReference type="InterPro" id="IPR037148">
    <property type="entry name" value="NiFe-Hase_small_C_sf"/>
</dbReference>
<dbReference type="InterPro" id="IPR037024">
    <property type="entry name" value="NiFe_Hase_small_N_sf"/>
</dbReference>
<dbReference type="InterPro" id="IPR001821">
    <property type="entry name" value="NiFe_hydrogenase_ssu"/>
</dbReference>
<dbReference type="InterPro" id="IPR006311">
    <property type="entry name" value="TAT_signal"/>
</dbReference>
<dbReference type="InterPro" id="IPR019546">
    <property type="entry name" value="TAT_signal_bac_arc"/>
</dbReference>
<dbReference type="NCBIfam" id="TIGR00391">
    <property type="entry name" value="hydA"/>
    <property type="match status" value="1"/>
</dbReference>
<dbReference type="NCBIfam" id="TIGR01409">
    <property type="entry name" value="TAT_signal_seq"/>
    <property type="match status" value="1"/>
</dbReference>
<dbReference type="PANTHER" id="PTHR30013:SF6">
    <property type="entry name" value="HYDROGENASE-1 SMALL CHAIN"/>
    <property type="match status" value="1"/>
</dbReference>
<dbReference type="PANTHER" id="PTHR30013">
    <property type="entry name" value="NIFE / NIFESE HYDROGENASE SMALL SUBUNIT FAMILY MEMBER"/>
    <property type="match status" value="1"/>
</dbReference>
<dbReference type="Pfam" id="PF14720">
    <property type="entry name" value="NiFe_hyd_SSU_C"/>
    <property type="match status" value="1"/>
</dbReference>
<dbReference type="Pfam" id="PF01058">
    <property type="entry name" value="Oxidored_q6"/>
    <property type="match status" value="1"/>
</dbReference>
<dbReference type="PIRSF" id="PIRSF000310">
    <property type="entry name" value="NiFe_hyd_ssu"/>
    <property type="match status" value="1"/>
</dbReference>
<dbReference type="PRINTS" id="PR00614">
    <property type="entry name" value="NIHGNASESMLL"/>
</dbReference>
<dbReference type="SUPFAM" id="SSF56770">
    <property type="entry name" value="HydA/Nqo6-like"/>
    <property type="match status" value="1"/>
</dbReference>
<dbReference type="PROSITE" id="PS51318">
    <property type="entry name" value="TAT"/>
    <property type="match status" value="1"/>
</dbReference>
<comment type="function">
    <text>This enzyme recycles the H(2) produced by nitrogenase to increase the production of ATP and to protect nitrogenase against inhibition or damage by O(2) under carbon- or phosphate-limited conditions.</text>
</comment>
<comment type="catalytic activity">
    <reaction>
        <text>H2 + A = AH2</text>
        <dbReference type="Rhea" id="RHEA:12116"/>
        <dbReference type="ChEBI" id="CHEBI:13193"/>
        <dbReference type="ChEBI" id="CHEBI:17499"/>
        <dbReference type="ChEBI" id="CHEBI:18276"/>
        <dbReference type="EC" id="1.12.99.6"/>
    </reaction>
</comment>
<comment type="cofactor">
    <cofactor evidence="1">
        <name>[4Fe-4S] cluster</name>
        <dbReference type="ChEBI" id="CHEBI:49883"/>
    </cofactor>
    <text evidence="1">Binds 2 [4Fe-4S] clusters.</text>
</comment>
<comment type="cofactor">
    <cofactor evidence="1">
        <name>[3Fe-4S] cluster</name>
        <dbReference type="ChEBI" id="CHEBI:21137"/>
    </cofactor>
    <text evidence="1">Binds 1 [3Fe-4S] cluster.</text>
</comment>
<comment type="subunit">
    <text>Heterodimer of a large and a small subunit.</text>
</comment>
<comment type="subcellular location">
    <subcellularLocation>
        <location>Cell membrane</location>
        <topology>Peripheral membrane protein</topology>
    </subcellularLocation>
</comment>
<comment type="PTM">
    <text>Predicted to be exported by the Tat system. The position of the signal peptide cleavage has been experimentally proven.</text>
</comment>
<comment type="similarity">
    <text evidence="4">Belongs to the [NiFe]/[NiFeSe] hydrogenase small subunit family.</text>
</comment>
<name>MBHS_AZOVI</name>
<feature type="signal peptide" description="Tat-type signal" evidence="2 3">
    <location>
        <begin position="1"/>
        <end position="45"/>
    </location>
</feature>
<feature type="chain" id="PRO_0000013424" description="Uptake hydrogenase small subunit">
    <location>
        <begin position="46"/>
        <end position="358"/>
    </location>
</feature>
<feature type="binding site" evidence="1">
    <location>
        <position position="62"/>
    </location>
    <ligand>
        <name>[4Fe-4S] cluster</name>
        <dbReference type="ChEBI" id="CHEBI:49883"/>
        <label>1</label>
    </ligand>
</feature>
<feature type="binding site" evidence="1">
    <location>
        <position position="65"/>
    </location>
    <ligand>
        <name>[4Fe-4S] cluster</name>
        <dbReference type="ChEBI" id="CHEBI:49883"/>
        <label>1</label>
    </ligand>
</feature>
<feature type="binding site" evidence="1">
    <location>
        <position position="160"/>
    </location>
    <ligand>
        <name>[4Fe-4S] cluster</name>
        <dbReference type="ChEBI" id="CHEBI:49883"/>
        <label>1</label>
    </ligand>
</feature>
<feature type="binding site" evidence="1">
    <location>
        <position position="194"/>
    </location>
    <ligand>
        <name>[4Fe-4S] cluster</name>
        <dbReference type="ChEBI" id="CHEBI:49883"/>
        <label>1</label>
    </ligand>
</feature>
<feature type="binding site" evidence="1">
    <location>
        <position position="232"/>
    </location>
    <ligand>
        <name>[4Fe-4S] cluster</name>
        <dbReference type="ChEBI" id="CHEBI:49883"/>
        <label>2</label>
    </ligand>
</feature>
<feature type="binding site" evidence="1">
    <location>
        <position position="235"/>
    </location>
    <ligand>
        <name>[4Fe-4S] cluster</name>
        <dbReference type="ChEBI" id="CHEBI:49883"/>
        <label>2</label>
    </ligand>
</feature>
<feature type="binding site" evidence="1">
    <location>
        <position position="260"/>
    </location>
    <ligand>
        <name>[4Fe-4S] cluster</name>
        <dbReference type="ChEBI" id="CHEBI:49883"/>
        <label>2</label>
    </ligand>
</feature>
<feature type="binding site" evidence="1">
    <location>
        <position position="266"/>
    </location>
    <ligand>
        <name>[4Fe-4S] cluster</name>
        <dbReference type="ChEBI" id="CHEBI:49883"/>
        <label>2</label>
    </ligand>
</feature>
<feature type="binding site" evidence="1">
    <location>
        <position position="275"/>
    </location>
    <ligand>
        <name>[3Fe-4S] cluster</name>
        <dbReference type="ChEBI" id="CHEBI:21137"/>
    </ligand>
</feature>
<feature type="binding site" evidence="1">
    <location>
        <position position="294"/>
    </location>
    <ligand>
        <name>[3Fe-4S] cluster</name>
        <dbReference type="ChEBI" id="CHEBI:21137"/>
    </ligand>
</feature>
<feature type="binding site" evidence="1">
    <location>
        <position position="297"/>
    </location>
    <ligand>
        <name>[3Fe-4S] cluster</name>
        <dbReference type="ChEBI" id="CHEBI:21137"/>
    </ligand>
</feature>
<accession>P21950</accession>
<reference key="1">
    <citation type="journal article" date="1990" name="Gene">
        <title>Cloning, sequencing and characterization of the [NiFe]hydrogenase-encoding structural genes (hoxK and hoxG) from Azotobacter vinelandii.</title>
        <authorList>
            <person name="Menon A.L."/>
            <person name="Stults L.W."/>
            <person name="Robson R.L."/>
            <person name="Mortenson L.E."/>
        </authorList>
    </citation>
    <scope>NUCLEOTIDE SEQUENCE [GENOMIC DNA]</scope>
    <scope>PROTEIN SEQUENCE OF 46-55</scope>
    <source>
        <strain>ATCC 13705 / OP1 / DSM 366 / NCIMB 11614 / LMG 3878 / UW</strain>
    </source>
</reference>
<gene>
    <name type="primary">hoxK</name>
</gene>
<organism>
    <name type="scientific">Azotobacter vinelandii</name>
    <dbReference type="NCBI Taxonomy" id="354"/>
    <lineage>
        <taxon>Bacteria</taxon>
        <taxon>Pseudomonadati</taxon>
        <taxon>Pseudomonadota</taxon>
        <taxon>Gammaproteobacteria</taxon>
        <taxon>Pseudomonadales</taxon>
        <taxon>Pseudomonadaceae</taxon>
        <taxon>Azotobacter</taxon>
    </lineage>
</organism>
<keyword id="KW-0003">3Fe-4S</keyword>
<keyword id="KW-0004">4Fe-4S</keyword>
<keyword id="KW-1003">Cell membrane</keyword>
<keyword id="KW-0903">Direct protein sequencing</keyword>
<keyword id="KW-0408">Iron</keyword>
<keyword id="KW-0411">Iron-sulfur</keyword>
<keyword id="KW-0472">Membrane</keyword>
<keyword id="KW-0479">Metal-binding</keyword>
<keyword id="KW-0560">Oxidoreductase</keyword>
<keyword id="KW-0732">Signal</keyword>
<sequence>MSRLETFYDVMRRQGITRRSFLKYCSLTAAALGLGPAFAPRIAHAMETKPRTPVLWLHGLECTCCSESFIRSAHPLVKDVVLSMISLDYDDTLMAAAGHQAEAALEETMRKYKGEYILAVEGNPPLNEDGMFCIVGGKPFIEQLRHVAKDAKAVIAWGSCASWGCVQAARPNPTQAVPIHKVITDKPIVKVPGCPPIAEVMTGVITYMLTFGKLPELDRQGRPKMFYGQRIHDKCYRRPHFDAGQFVEHWDDEGARKGYCLYKVGCKGPTSYNACSTVRWNEGTSFPIQAGHGCIGCSEDGFWDKGSFYERLTTIPQFGIEKNADEIGAAVAGGVGAAIAAHAAVTAIKRLQNKGDRP</sequence>
<evidence type="ECO:0000250" key="1">
    <source>
        <dbReference type="UniProtKB" id="P21853"/>
    </source>
</evidence>
<evidence type="ECO:0000255" key="2">
    <source>
        <dbReference type="PROSITE-ProRule" id="PRU00648"/>
    </source>
</evidence>
<evidence type="ECO:0000269" key="3">
    <source>
    </source>
</evidence>
<evidence type="ECO:0000305" key="4"/>